<evidence type="ECO:0000255" key="1">
    <source>
        <dbReference type="HAMAP-Rule" id="MF_00077"/>
    </source>
</evidence>
<reference key="1">
    <citation type="journal article" date="2007" name="Archaea">
        <title>The genome of Hyperthermus butylicus: a sulfur-reducing, peptide fermenting, neutrophilic Crenarchaeote growing up to 108 degrees C.</title>
        <authorList>
            <person name="Bruegger K."/>
            <person name="Chen L."/>
            <person name="Stark M."/>
            <person name="Zibat A."/>
            <person name="Redder P."/>
            <person name="Ruepp A."/>
            <person name="Awayez M."/>
            <person name="She Q."/>
            <person name="Garrett R.A."/>
            <person name="Klenk H.-P."/>
        </authorList>
    </citation>
    <scope>NUCLEOTIDE SEQUENCE [LARGE SCALE GENOMIC DNA]</scope>
    <source>
        <strain>DSM 5456 / JCM 9403 / PLM1-5</strain>
    </source>
</reference>
<gene>
    <name type="ordered locus">Hbut_1137</name>
</gene>
<name>TRM56_HYPBU</name>
<keyword id="KW-0963">Cytoplasm</keyword>
<keyword id="KW-0489">Methyltransferase</keyword>
<keyword id="KW-1185">Reference proteome</keyword>
<keyword id="KW-0949">S-adenosyl-L-methionine</keyword>
<keyword id="KW-0808">Transferase</keyword>
<keyword id="KW-0819">tRNA processing</keyword>
<comment type="function">
    <text evidence="1">Specifically catalyzes the AdoMet-dependent 2'-O-ribose methylation of cytidine at position 56 in tRNAs.</text>
</comment>
<comment type="catalytic activity">
    <reaction evidence="1">
        <text>cytidine(56) in tRNA + S-adenosyl-L-methionine = 2'-O-methylcytidine(56) in tRNA + S-adenosyl-L-homocysteine + H(+)</text>
        <dbReference type="Rhea" id="RHEA:42968"/>
        <dbReference type="Rhea" id="RHEA-COMP:10308"/>
        <dbReference type="Rhea" id="RHEA-COMP:10309"/>
        <dbReference type="ChEBI" id="CHEBI:15378"/>
        <dbReference type="ChEBI" id="CHEBI:57856"/>
        <dbReference type="ChEBI" id="CHEBI:59789"/>
        <dbReference type="ChEBI" id="CHEBI:74495"/>
        <dbReference type="ChEBI" id="CHEBI:82748"/>
        <dbReference type="EC" id="2.1.1.206"/>
    </reaction>
</comment>
<comment type="subunit">
    <text evidence="1">Homodimer.</text>
</comment>
<comment type="subcellular location">
    <subcellularLocation>
        <location evidence="1">Cytoplasm</location>
    </subcellularLocation>
</comment>
<comment type="similarity">
    <text evidence="1">Belongs to the aTrm56 family.</text>
</comment>
<sequence>MSYSHPASRYERVYVLRIGHRPERDKRITTHVGLVARAFGANGFILGDTCDEKVMESLKDVIDRWGGSMELACGVNSRRYVLEWKRAGGEVIHLTMYGLHVDDVIEEIKRSSKPKLIIVGAEKVPPFFYEYADYNVAIGHQPHSEVAALAIFLHKLYEGKELYIDFPRAKLRIVPSARGKKVVSREA</sequence>
<dbReference type="EC" id="2.1.1.206" evidence="1"/>
<dbReference type="EMBL" id="CP000493">
    <property type="protein sequence ID" value="ABM80974.1"/>
    <property type="molecule type" value="Genomic_DNA"/>
</dbReference>
<dbReference type="RefSeq" id="WP_011822292.1">
    <property type="nucleotide sequence ID" value="NC_008818.1"/>
</dbReference>
<dbReference type="SMR" id="A2BLW3"/>
<dbReference type="STRING" id="415426.Hbut_1137"/>
<dbReference type="EnsemblBacteria" id="ABM80974">
    <property type="protein sequence ID" value="ABM80974"/>
    <property type="gene ID" value="Hbut_1137"/>
</dbReference>
<dbReference type="GeneID" id="4782986"/>
<dbReference type="KEGG" id="hbu:Hbut_1137"/>
<dbReference type="eggNOG" id="arCOG01857">
    <property type="taxonomic scope" value="Archaea"/>
</dbReference>
<dbReference type="HOGENOM" id="CLU_123709_0_0_2"/>
<dbReference type="OrthoDB" id="14397at2157"/>
<dbReference type="Proteomes" id="UP000002593">
    <property type="component" value="Chromosome"/>
</dbReference>
<dbReference type="GO" id="GO:0005737">
    <property type="term" value="C:cytoplasm"/>
    <property type="evidence" value="ECO:0007669"/>
    <property type="project" value="UniProtKB-SubCell"/>
</dbReference>
<dbReference type="GO" id="GO:0106059">
    <property type="term" value="F:tRNA (cytidine(56)-2'-O)-methyltransferase activity"/>
    <property type="evidence" value="ECO:0007669"/>
    <property type="project" value="UniProtKB-EC"/>
</dbReference>
<dbReference type="GO" id="GO:0002128">
    <property type="term" value="P:tRNA nucleoside ribose methylation"/>
    <property type="evidence" value="ECO:0007669"/>
    <property type="project" value="UniProtKB-UniRule"/>
</dbReference>
<dbReference type="CDD" id="cd18083">
    <property type="entry name" value="aTrm56-like"/>
    <property type="match status" value="1"/>
</dbReference>
<dbReference type="Gene3D" id="3.40.1280.10">
    <property type="match status" value="1"/>
</dbReference>
<dbReference type="HAMAP" id="MF_00077">
    <property type="entry name" value="tRNA_methyltr_aTrm56"/>
    <property type="match status" value="1"/>
</dbReference>
<dbReference type="InterPro" id="IPR029028">
    <property type="entry name" value="Alpha/beta_knot_MTases"/>
</dbReference>
<dbReference type="InterPro" id="IPR029026">
    <property type="entry name" value="tRNA_m1G_MTases_N"/>
</dbReference>
<dbReference type="InterPro" id="IPR002845">
    <property type="entry name" value="tRNA_mtfrase_aTrm56"/>
</dbReference>
<dbReference type="NCBIfam" id="NF003048">
    <property type="entry name" value="PRK03958.1"/>
    <property type="match status" value="1"/>
</dbReference>
<dbReference type="PANTHER" id="PTHR42197">
    <property type="entry name" value="TRNA (CYTIDINE(56)-2'-O)-METHYLTRANSFERASE"/>
    <property type="match status" value="1"/>
</dbReference>
<dbReference type="PANTHER" id="PTHR42197:SF1">
    <property type="entry name" value="TRNA (CYTIDINE(56)-2'-O)-METHYLTRANSFERASE"/>
    <property type="match status" value="1"/>
</dbReference>
<dbReference type="Pfam" id="PF01994">
    <property type="entry name" value="Trm56"/>
    <property type="match status" value="1"/>
</dbReference>
<dbReference type="PIRSF" id="PIRSF016123">
    <property type="entry name" value="UCP016123"/>
    <property type="match status" value="1"/>
</dbReference>
<dbReference type="SUPFAM" id="SSF75217">
    <property type="entry name" value="alpha/beta knot"/>
    <property type="match status" value="1"/>
</dbReference>
<proteinExistence type="inferred from homology"/>
<feature type="chain" id="PRO_0000365301" description="tRNA (cytidine(56)-2'-O)-methyltransferase">
    <location>
        <begin position="1"/>
        <end position="187"/>
    </location>
</feature>
<feature type="binding site" evidence="1">
    <location>
        <position position="94"/>
    </location>
    <ligand>
        <name>S-adenosyl-L-methionine</name>
        <dbReference type="ChEBI" id="CHEBI:59789"/>
    </ligand>
</feature>
<feature type="binding site" evidence="1">
    <location>
        <begin position="120"/>
        <end position="124"/>
    </location>
    <ligand>
        <name>S-adenosyl-L-methionine</name>
        <dbReference type="ChEBI" id="CHEBI:59789"/>
    </ligand>
</feature>
<accession>A2BLW3</accession>
<organism>
    <name type="scientific">Hyperthermus butylicus (strain DSM 5456 / JCM 9403 / PLM1-5)</name>
    <dbReference type="NCBI Taxonomy" id="415426"/>
    <lineage>
        <taxon>Archaea</taxon>
        <taxon>Thermoproteota</taxon>
        <taxon>Thermoprotei</taxon>
        <taxon>Desulfurococcales</taxon>
        <taxon>Pyrodictiaceae</taxon>
        <taxon>Hyperthermus</taxon>
    </lineage>
</organism>
<protein>
    <recommendedName>
        <fullName evidence="1">tRNA (cytidine(56)-2'-O)-methyltransferase</fullName>
        <ecNumber evidence="1">2.1.1.206</ecNumber>
    </recommendedName>
    <alternativeName>
        <fullName evidence="1">tRNA ribose 2'-O-methyltransferase aTrm56</fullName>
    </alternativeName>
</protein>